<sequence length="475" mass="52423">MQETTVKRDGASPSDAGTPATTAQGLGKLYIRTFGCQMNEYDSDKMADVLRADQGLELTDNPEDADVILFNTCSVREKAQEKVFSDLGRVQHLKKQNPNLVIGVGGCVASQEGEAIVKRAPYVDVVFGPQTLHRLPDLIKRRRAQGVSQVDISFPEIEKFDALPPPRVDGATAFVSIMEGCSKYCSFCVVPYTRGEEVSRPFDDVLLEVADLADQGVKEVTLLGQNVNAYRGAMGDSGEIADFAMLLEYVHEIPGIERIRYTTSHPKEMTQRMVDAYARLPKLVSFLHLPVQAGSDRVLAAMKRGYTALEFKSVVRRLRAARPSLTLSSDFIVGFPGETEEDFQKTMKLIEDVGFDTSFSFVYSRRPGTPAADLHDDTPQDVKLRRLQQLQALINQQAAAIAQGMIGTRQRVLVEGPSRRDPNELMGRTENNRIVNFPGVPRLIGHMVDVVVTHAHTNSLRGRVAGIERDTSGAE</sequence>
<name>MIAB_BORBR</name>
<gene>
    <name evidence="1" type="primary">miaB</name>
    <name type="ordered locus">BB1357</name>
</gene>
<feature type="chain" id="PRO_0000374156" description="tRNA-2-methylthio-N(6)-dimethylallyladenosine synthase">
    <location>
        <begin position="1"/>
        <end position="475"/>
    </location>
</feature>
<feature type="domain" description="MTTase N-terminal" evidence="1">
    <location>
        <begin position="27"/>
        <end position="144"/>
    </location>
</feature>
<feature type="domain" description="Radical SAM core" evidence="2">
    <location>
        <begin position="167"/>
        <end position="400"/>
    </location>
</feature>
<feature type="domain" description="TRAM" evidence="1">
    <location>
        <begin position="403"/>
        <end position="466"/>
    </location>
</feature>
<feature type="region of interest" description="Disordered" evidence="3">
    <location>
        <begin position="1"/>
        <end position="22"/>
    </location>
</feature>
<feature type="compositionally biased region" description="Basic and acidic residues" evidence="3">
    <location>
        <begin position="1"/>
        <end position="10"/>
    </location>
</feature>
<feature type="binding site" evidence="1">
    <location>
        <position position="36"/>
    </location>
    <ligand>
        <name>[4Fe-4S] cluster</name>
        <dbReference type="ChEBI" id="CHEBI:49883"/>
        <label>1</label>
    </ligand>
</feature>
<feature type="binding site" evidence="1">
    <location>
        <position position="73"/>
    </location>
    <ligand>
        <name>[4Fe-4S] cluster</name>
        <dbReference type="ChEBI" id="CHEBI:49883"/>
        <label>1</label>
    </ligand>
</feature>
<feature type="binding site" evidence="1">
    <location>
        <position position="107"/>
    </location>
    <ligand>
        <name>[4Fe-4S] cluster</name>
        <dbReference type="ChEBI" id="CHEBI:49883"/>
        <label>1</label>
    </ligand>
</feature>
<feature type="binding site" evidence="1">
    <location>
        <position position="181"/>
    </location>
    <ligand>
        <name>[4Fe-4S] cluster</name>
        <dbReference type="ChEBI" id="CHEBI:49883"/>
        <label>2</label>
        <note>4Fe-4S-S-AdoMet</note>
    </ligand>
</feature>
<feature type="binding site" evidence="1">
    <location>
        <position position="185"/>
    </location>
    <ligand>
        <name>[4Fe-4S] cluster</name>
        <dbReference type="ChEBI" id="CHEBI:49883"/>
        <label>2</label>
        <note>4Fe-4S-S-AdoMet</note>
    </ligand>
</feature>
<feature type="binding site" evidence="1">
    <location>
        <position position="188"/>
    </location>
    <ligand>
        <name>[4Fe-4S] cluster</name>
        <dbReference type="ChEBI" id="CHEBI:49883"/>
        <label>2</label>
        <note>4Fe-4S-S-AdoMet</note>
    </ligand>
</feature>
<accession>Q7WMN3</accession>
<comment type="function">
    <text evidence="1">Catalyzes the methylthiolation of N6-(dimethylallyl)adenosine (i(6)A), leading to the formation of 2-methylthio-N6-(dimethylallyl)adenosine (ms(2)i(6)A) at position 37 in tRNAs that read codons beginning with uridine.</text>
</comment>
<comment type="catalytic activity">
    <reaction evidence="1">
        <text>N(6)-dimethylallyladenosine(37) in tRNA + (sulfur carrier)-SH + AH2 + 2 S-adenosyl-L-methionine = 2-methylsulfanyl-N(6)-dimethylallyladenosine(37) in tRNA + (sulfur carrier)-H + 5'-deoxyadenosine + L-methionine + A + S-adenosyl-L-homocysteine + 2 H(+)</text>
        <dbReference type="Rhea" id="RHEA:37067"/>
        <dbReference type="Rhea" id="RHEA-COMP:10375"/>
        <dbReference type="Rhea" id="RHEA-COMP:10376"/>
        <dbReference type="Rhea" id="RHEA-COMP:14737"/>
        <dbReference type="Rhea" id="RHEA-COMP:14739"/>
        <dbReference type="ChEBI" id="CHEBI:13193"/>
        <dbReference type="ChEBI" id="CHEBI:15378"/>
        <dbReference type="ChEBI" id="CHEBI:17319"/>
        <dbReference type="ChEBI" id="CHEBI:17499"/>
        <dbReference type="ChEBI" id="CHEBI:29917"/>
        <dbReference type="ChEBI" id="CHEBI:57844"/>
        <dbReference type="ChEBI" id="CHEBI:57856"/>
        <dbReference type="ChEBI" id="CHEBI:59789"/>
        <dbReference type="ChEBI" id="CHEBI:64428"/>
        <dbReference type="ChEBI" id="CHEBI:74415"/>
        <dbReference type="ChEBI" id="CHEBI:74417"/>
        <dbReference type="EC" id="2.8.4.3"/>
    </reaction>
</comment>
<comment type="cofactor">
    <cofactor evidence="1">
        <name>[4Fe-4S] cluster</name>
        <dbReference type="ChEBI" id="CHEBI:49883"/>
    </cofactor>
    <text evidence="1">Binds 2 [4Fe-4S] clusters. One cluster is coordinated with 3 cysteines and an exchangeable S-adenosyl-L-methionine.</text>
</comment>
<comment type="subunit">
    <text evidence="1">Monomer.</text>
</comment>
<comment type="subcellular location">
    <subcellularLocation>
        <location evidence="1">Cytoplasm</location>
    </subcellularLocation>
</comment>
<comment type="similarity">
    <text evidence="1">Belongs to the methylthiotransferase family. MiaB subfamily.</text>
</comment>
<proteinExistence type="inferred from homology"/>
<reference key="1">
    <citation type="journal article" date="2003" name="Nat. Genet.">
        <title>Comparative analysis of the genome sequences of Bordetella pertussis, Bordetella parapertussis and Bordetella bronchiseptica.</title>
        <authorList>
            <person name="Parkhill J."/>
            <person name="Sebaihia M."/>
            <person name="Preston A."/>
            <person name="Murphy L.D."/>
            <person name="Thomson N.R."/>
            <person name="Harris D.E."/>
            <person name="Holden M.T.G."/>
            <person name="Churcher C.M."/>
            <person name="Bentley S.D."/>
            <person name="Mungall K.L."/>
            <person name="Cerdeno-Tarraga A.-M."/>
            <person name="Temple L."/>
            <person name="James K.D."/>
            <person name="Harris B."/>
            <person name="Quail M.A."/>
            <person name="Achtman M."/>
            <person name="Atkin R."/>
            <person name="Baker S."/>
            <person name="Basham D."/>
            <person name="Bason N."/>
            <person name="Cherevach I."/>
            <person name="Chillingworth T."/>
            <person name="Collins M."/>
            <person name="Cronin A."/>
            <person name="Davis P."/>
            <person name="Doggett J."/>
            <person name="Feltwell T."/>
            <person name="Goble A."/>
            <person name="Hamlin N."/>
            <person name="Hauser H."/>
            <person name="Holroyd S."/>
            <person name="Jagels K."/>
            <person name="Leather S."/>
            <person name="Moule S."/>
            <person name="Norberczak H."/>
            <person name="O'Neil S."/>
            <person name="Ormond D."/>
            <person name="Price C."/>
            <person name="Rabbinowitsch E."/>
            <person name="Rutter S."/>
            <person name="Sanders M."/>
            <person name="Saunders D."/>
            <person name="Seeger K."/>
            <person name="Sharp S."/>
            <person name="Simmonds M."/>
            <person name="Skelton J."/>
            <person name="Squares R."/>
            <person name="Squares S."/>
            <person name="Stevens K."/>
            <person name="Unwin L."/>
            <person name="Whitehead S."/>
            <person name="Barrell B.G."/>
            <person name="Maskell D.J."/>
        </authorList>
    </citation>
    <scope>NUCLEOTIDE SEQUENCE [LARGE SCALE GENOMIC DNA]</scope>
    <source>
        <strain>ATCC BAA-588 / NCTC 13252 / RB50</strain>
    </source>
</reference>
<keyword id="KW-0004">4Fe-4S</keyword>
<keyword id="KW-0963">Cytoplasm</keyword>
<keyword id="KW-0408">Iron</keyword>
<keyword id="KW-0411">Iron-sulfur</keyword>
<keyword id="KW-0479">Metal-binding</keyword>
<keyword id="KW-0949">S-adenosyl-L-methionine</keyword>
<keyword id="KW-0808">Transferase</keyword>
<keyword id="KW-0819">tRNA processing</keyword>
<evidence type="ECO:0000255" key="1">
    <source>
        <dbReference type="HAMAP-Rule" id="MF_01864"/>
    </source>
</evidence>
<evidence type="ECO:0000255" key="2">
    <source>
        <dbReference type="PROSITE-ProRule" id="PRU01266"/>
    </source>
</evidence>
<evidence type="ECO:0000256" key="3">
    <source>
        <dbReference type="SAM" id="MobiDB-lite"/>
    </source>
</evidence>
<organism>
    <name type="scientific">Bordetella bronchiseptica (strain ATCC BAA-588 / NCTC 13252 / RB50)</name>
    <name type="common">Alcaligenes bronchisepticus</name>
    <dbReference type="NCBI Taxonomy" id="257310"/>
    <lineage>
        <taxon>Bacteria</taxon>
        <taxon>Pseudomonadati</taxon>
        <taxon>Pseudomonadota</taxon>
        <taxon>Betaproteobacteria</taxon>
        <taxon>Burkholderiales</taxon>
        <taxon>Alcaligenaceae</taxon>
        <taxon>Bordetella</taxon>
    </lineage>
</organism>
<protein>
    <recommendedName>
        <fullName evidence="1">tRNA-2-methylthio-N(6)-dimethylallyladenosine synthase</fullName>
        <ecNumber evidence="1">2.8.4.3</ecNumber>
    </recommendedName>
    <alternativeName>
        <fullName evidence="1">(Dimethylallyl)adenosine tRNA methylthiotransferase MiaB</fullName>
    </alternativeName>
    <alternativeName>
        <fullName evidence="1">tRNA-i(6)A37 methylthiotransferase</fullName>
    </alternativeName>
</protein>
<dbReference type="EC" id="2.8.4.3" evidence="1"/>
<dbReference type="EMBL" id="BX640441">
    <property type="protein sequence ID" value="CAE31855.1"/>
    <property type="molecule type" value="Genomic_DNA"/>
</dbReference>
<dbReference type="RefSeq" id="WP_003809403.1">
    <property type="nucleotide sequence ID" value="NC_002927.3"/>
</dbReference>
<dbReference type="SMR" id="Q7WMN3"/>
<dbReference type="GeneID" id="56479963"/>
<dbReference type="KEGG" id="bbr:BB1357"/>
<dbReference type="eggNOG" id="COG0621">
    <property type="taxonomic scope" value="Bacteria"/>
</dbReference>
<dbReference type="HOGENOM" id="CLU_018697_2_0_4"/>
<dbReference type="Proteomes" id="UP000001027">
    <property type="component" value="Chromosome"/>
</dbReference>
<dbReference type="GO" id="GO:0005829">
    <property type="term" value="C:cytosol"/>
    <property type="evidence" value="ECO:0007669"/>
    <property type="project" value="TreeGrafter"/>
</dbReference>
<dbReference type="GO" id="GO:0051539">
    <property type="term" value="F:4 iron, 4 sulfur cluster binding"/>
    <property type="evidence" value="ECO:0007669"/>
    <property type="project" value="UniProtKB-UniRule"/>
</dbReference>
<dbReference type="GO" id="GO:0046872">
    <property type="term" value="F:metal ion binding"/>
    <property type="evidence" value="ECO:0007669"/>
    <property type="project" value="UniProtKB-KW"/>
</dbReference>
<dbReference type="GO" id="GO:0035597">
    <property type="term" value="F:N6-isopentenyladenosine methylthiotransferase activity"/>
    <property type="evidence" value="ECO:0007669"/>
    <property type="project" value="TreeGrafter"/>
</dbReference>
<dbReference type="CDD" id="cd01335">
    <property type="entry name" value="Radical_SAM"/>
    <property type="match status" value="1"/>
</dbReference>
<dbReference type="FunFam" id="3.40.50.12160:FF:000001">
    <property type="entry name" value="tRNA-2-methylthio-N(6)-dimethylallyladenosine synthase"/>
    <property type="match status" value="1"/>
</dbReference>
<dbReference type="FunFam" id="3.80.30.20:FF:000001">
    <property type="entry name" value="tRNA-2-methylthio-N(6)-dimethylallyladenosine synthase 2"/>
    <property type="match status" value="1"/>
</dbReference>
<dbReference type="Gene3D" id="3.40.50.12160">
    <property type="entry name" value="Methylthiotransferase, N-terminal domain"/>
    <property type="match status" value="1"/>
</dbReference>
<dbReference type="Gene3D" id="3.80.30.20">
    <property type="entry name" value="tm_1862 like domain"/>
    <property type="match status" value="1"/>
</dbReference>
<dbReference type="HAMAP" id="MF_01864">
    <property type="entry name" value="tRNA_metthiotr_MiaB"/>
    <property type="match status" value="1"/>
</dbReference>
<dbReference type="InterPro" id="IPR006638">
    <property type="entry name" value="Elp3/MiaA/NifB-like_rSAM"/>
</dbReference>
<dbReference type="InterPro" id="IPR005839">
    <property type="entry name" value="Methylthiotransferase"/>
</dbReference>
<dbReference type="InterPro" id="IPR020612">
    <property type="entry name" value="Methylthiotransferase_CS"/>
</dbReference>
<dbReference type="InterPro" id="IPR013848">
    <property type="entry name" value="Methylthiotransferase_N"/>
</dbReference>
<dbReference type="InterPro" id="IPR038135">
    <property type="entry name" value="Methylthiotransferase_N_sf"/>
</dbReference>
<dbReference type="InterPro" id="IPR006463">
    <property type="entry name" value="MiaB_methiolase"/>
</dbReference>
<dbReference type="InterPro" id="IPR007197">
    <property type="entry name" value="rSAM"/>
</dbReference>
<dbReference type="InterPro" id="IPR023404">
    <property type="entry name" value="rSAM_horseshoe"/>
</dbReference>
<dbReference type="InterPro" id="IPR002792">
    <property type="entry name" value="TRAM_dom"/>
</dbReference>
<dbReference type="NCBIfam" id="TIGR01574">
    <property type="entry name" value="miaB-methiolase"/>
    <property type="match status" value="1"/>
</dbReference>
<dbReference type="NCBIfam" id="TIGR00089">
    <property type="entry name" value="MiaB/RimO family radical SAM methylthiotransferase"/>
    <property type="match status" value="1"/>
</dbReference>
<dbReference type="PANTHER" id="PTHR43020">
    <property type="entry name" value="CDK5 REGULATORY SUBUNIT-ASSOCIATED PROTEIN 1"/>
    <property type="match status" value="1"/>
</dbReference>
<dbReference type="PANTHER" id="PTHR43020:SF2">
    <property type="entry name" value="MITOCHONDRIAL TRNA METHYLTHIOTRANSFERASE CDK5RAP1"/>
    <property type="match status" value="1"/>
</dbReference>
<dbReference type="Pfam" id="PF04055">
    <property type="entry name" value="Radical_SAM"/>
    <property type="match status" value="1"/>
</dbReference>
<dbReference type="Pfam" id="PF01938">
    <property type="entry name" value="TRAM"/>
    <property type="match status" value="1"/>
</dbReference>
<dbReference type="Pfam" id="PF00919">
    <property type="entry name" value="UPF0004"/>
    <property type="match status" value="1"/>
</dbReference>
<dbReference type="SFLD" id="SFLDF00273">
    <property type="entry name" value="(dimethylallyl)adenosine_tRNA"/>
    <property type="match status" value="1"/>
</dbReference>
<dbReference type="SFLD" id="SFLDG01082">
    <property type="entry name" value="B12-binding_domain_containing"/>
    <property type="match status" value="1"/>
</dbReference>
<dbReference type="SFLD" id="SFLDS00029">
    <property type="entry name" value="Radical_SAM"/>
    <property type="match status" value="1"/>
</dbReference>
<dbReference type="SMART" id="SM00729">
    <property type="entry name" value="Elp3"/>
    <property type="match status" value="1"/>
</dbReference>
<dbReference type="SUPFAM" id="SSF102114">
    <property type="entry name" value="Radical SAM enzymes"/>
    <property type="match status" value="1"/>
</dbReference>
<dbReference type="PROSITE" id="PS51449">
    <property type="entry name" value="MTTASE_N"/>
    <property type="match status" value="1"/>
</dbReference>
<dbReference type="PROSITE" id="PS01278">
    <property type="entry name" value="MTTASE_RADICAL"/>
    <property type="match status" value="1"/>
</dbReference>
<dbReference type="PROSITE" id="PS51918">
    <property type="entry name" value="RADICAL_SAM"/>
    <property type="match status" value="1"/>
</dbReference>
<dbReference type="PROSITE" id="PS50926">
    <property type="entry name" value="TRAM"/>
    <property type="match status" value="1"/>
</dbReference>